<accession>C1CPL5</accession>
<protein>
    <recommendedName>
        <fullName evidence="1">S-ribosylhomocysteine lyase</fullName>
        <ecNumber evidence="1">4.4.1.21</ecNumber>
    </recommendedName>
    <alternativeName>
        <fullName evidence="1">AI-2 synthesis protein</fullName>
    </alternativeName>
    <alternativeName>
        <fullName evidence="1">Autoinducer-2 production protein LuxS</fullName>
    </alternativeName>
</protein>
<keyword id="KW-0071">Autoinducer synthesis</keyword>
<keyword id="KW-0408">Iron</keyword>
<keyword id="KW-0456">Lyase</keyword>
<keyword id="KW-0479">Metal-binding</keyword>
<keyword id="KW-0673">Quorum sensing</keyword>
<feature type="chain" id="PRO_1000191044" description="S-ribosylhomocysteine lyase">
    <location>
        <begin position="1"/>
        <end position="160"/>
    </location>
</feature>
<feature type="binding site" evidence="1">
    <location>
        <position position="57"/>
    </location>
    <ligand>
        <name>Fe cation</name>
        <dbReference type="ChEBI" id="CHEBI:24875"/>
    </ligand>
</feature>
<feature type="binding site" evidence="1">
    <location>
        <position position="61"/>
    </location>
    <ligand>
        <name>Fe cation</name>
        <dbReference type="ChEBI" id="CHEBI:24875"/>
    </ligand>
</feature>
<feature type="binding site" evidence="1">
    <location>
        <position position="127"/>
    </location>
    <ligand>
        <name>Fe cation</name>
        <dbReference type="ChEBI" id="CHEBI:24875"/>
    </ligand>
</feature>
<dbReference type="EC" id="4.4.1.21" evidence="1"/>
<dbReference type="EMBL" id="CP000921">
    <property type="protein sequence ID" value="ACO22927.1"/>
    <property type="molecule type" value="Genomic_DNA"/>
</dbReference>
<dbReference type="RefSeq" id="WP_000032550.1">
    <property type="nucleotide sequence ID" value="NC_012469.1"/>
</dbReference>
<dbReference type="SMR" id="C1CPL5"/>
<dbReference type="KEGG" id="snt:SPT_0389"/>
<dbReference type="HOGENOM" id="CLU_107531_2_1_9"/>
<dbReference type="GO" id="GO:0005506">
    <property type="term" value="F:iron ion binding"/>
    <property type="evidence" value="ECO:0007669"/>
    <property type="project" value="InterPro"/>
</dbReference>
<dbReference type="GO" id="GO:0043768">
    <property type="term" value="F:S-ribosylhomocysteine lyase activity"/>
    <property type="evidence" value="ECO:0007669"/>
    <property type="project" value="UniProtKB-UniRule"/>
</dbReference>
<dbReference type="GO" id="GO:0009372">
    <property type="term" value="P:quorum sensing"/>
    <property type="evidence" value="ECO:0007669"/>
    <property type="project" value="UniProtKB-UniRule"/>
</dbReference>
<dbReference type="Gene3D" id="3.30.1360.80">
    <property type="entry name" value="S-ribosylhomocysteinase (LuxS)"/>
    <property type="match status" value="1"/>
</dbReference>
<dbReference type="HAMAP" id="MF_00091">
    <property type="entry name" value="LuxS"/>
    <property type="match status" value="1"/>
</dbReference>
<dbReference type="InterPro" id="IPR037005">
    <property type="entry name" value="LuxS_sf"/>
</dbReference>
<dbReference type="InterPro" id="IPR011249">
    <property type="entry name" value="Metalloenz_LuxS/M16"/>
</dbReference>
<dbReference type="InterPro" id="IPR003815">
    <property type="entry name" value="S-ribosylhomocysteinase"/>
</dbReference>
<dbReference type="NCBIfam" id="NF002607">
    <property type="entry name" value="PRK02260.2-5"/>
    <property type="match status" value="1"/>
</dbReference>
<dbReference type="NCBIfam" id="NF002608">
    <property type="entry name" value="PRK02260.3-1"/>
    <property type="match status" value="1"/>
</dbReference>
<dbReference type="PANTHER" id="PTHR35799">
    <property type="entry name" value="S-RIBOSYLHOMOCYSTEINE LYASE"/>
    <property type="match status" value="1"/>
</dbReference>
<dbReference type="PANTHER" id="PTHR35799:SF1">
    <property type="entry name" value="S-RIBOSYLHOMOCYSTEINE LYASE"/>
    <property type="match status" value="1"/>
</dbReference>
<dbReference type="Pfam" id="PF02664">
    <property type="entry name" value="LuxS"/>
    <property type="match status" value="1"/>
</dbReference>
<dbReference type="PIRSF" id="PIRSF006160">
    <property type="entry name" value="AI2"/>
    <property type="match status" value="1"/>
</dbReference>
<dbReference type="PRINTS" id="PR01487">
    <property type="entry name" value="LUXSPROTEIN"/>
</dbReference>
<dbReference type="SUPFAM" id="SSF63411">
    <property type="entry name" value="LuxS/MPP-like metallohydrolase"/>
    <property type="match status" value="1"/>
</dbReference>
<name>LUXS_STRZT</name>
<sequence>MSKEVIVESFELDHTIVKAPYVRLIGEETGPKGDIISNYDIRLVQPNEDSIPTAGLHTIEHLLAKLIRTRIDGMIDCSPFGCRTGFHMIMWGRHTSAKIAAVIKDSLKEIAETTTWEDVPGTTIESCGNYKDHSLFSAKEWAKLILEQGISDDAFERHVI</sequence>
<proteinExistence type="inferred from homology"/>
<reference key="1">
    <citation type="journal article" date="2010" name="Genome Biol.">
        <title>Structure and dynamics of the pan-genome of Streptococcus pneumoniae and closely related species.</title>
        <authorList>
            <person name="Donati C."/>
            <person name="Hiller N.L."/>
            <person name="Tettelin H."/>
            <person name="Muzzi A."/>
            <person name="Croucher N.J."/>
            <person name="Angiuoli S.V."/>
            <person name="Oggioni M."/>
            <person name="Dunning Hotopp J.C."/>
            <person name="Hu F.Z."/>
            <person name="Riley D.R."/>
            <person name="Covacci A."/>
            <person name="Mitchell T.J."/>
            <person name="Bentley S.D."/>
            <person name="Kilian M."/>
            <person name="Ehrlich G.D."/>
            <person name="Rappuoli R."/>
            <person name="Moxon E.R."/>
            <person name="Masignani V."/>
        </authorList>
    </citation>
    <scope>NUCLEOTIDE SEQUENCE [LARGE SCALE GENOMIC DNA]</scope>
    <source>
        <strain>Taiwan19F-14</strain>
    </source>
</reference>
<organism>
    <name type="scientific">Streptococcus pneumoniae (strain Taiwan19F-14)</name>
    <dbReference type="NCBI Taxonomy" id="487213"/>
    <lineage>
        <taxon>Bacteria</taxon>
        <taxon>Bacillati</taxon>
        <taxon>Bacillota</taxon>
        <taxon>Bacilli</taxon>
        <taxon>Lactobacillales</taxon>
        <taxon>Streptococcaceae</taxon>
        <taxon>Streptococcus</taxon>
    </lineage>
</organism>
<evidence type="ECO:0000255" key="1">
    <source>
        <dbReference type="HAMAP-Rule" id="MF_00091"/>
    </source>
</evidence>
<comment type="function">
    <text evidence="1">Involved in the synthesis of autoinducer 2 (AI-2) which is secreted by bacteria and is used to communicate both the cell density and the metabolic potential of the environment. The regulation of gene expression in response to changes in cell density is called quorum sensing. Catalyzes the transformation of S-ribosylhomocysteine (RHC) to homocysteine (HC) and 4,5-dihydroxy-2,3-pentadione (DPD).</text>
</comment>
<comment type="catalytic activity">
    <reaction evidence="1">
        <text>S-(5-deoxy-D-ribos-5-yl)-L-homocysteine = (S)-4,5-dihydroxypentane-2,3-dione + L-homocysteine</text>
        <dbReference type="Rhea" id="RHEA:17753"/>
        <dbReference type="ChEBI" id="CHEBI:29484"/>
        <dbReference type="ChEBI" id="CHEBI:58195"/>
        <dbReference type="ChEBI" id="CHEBI:58199"/>
        <dbReference type="EC" id="4.4.1.21"/>
    </reaction>
</comment>
<comment type="cofactor">
    <cofactor evidence="1">
        <name>Fe cation</name>
        <dbReference type="ChEBI" id="CHEBI:24875"/>
    </cofactor>
    <text evidence="1">Binds 1 Fe cation per subunit.</text>
</comment>
<comment type="subunit">
    <text evidence="1">Homodimer.</text>
</comment>
<comment type="similarity">
    <text evidence="1">Belongs to the LuxS family.</text>
</comment>
<gene>
    <name evidence="1" type="primary">luxS</name>
    <name type="ordered locus">SPT_0389</name>
</gene>